<gene>
    <name evidence="1" type="primary">luxS</name>
    <name type="ordered locus">Sputcn32_0938</name>
</gene>
<feature type="chain" id="PRO_1000004848" description="S-ribosylhomocysteine lyase">
    <location>
        <begin position="1"/>
        <end position="169"/>
    </location>
</feature>
<feature type="binding site" evidence="1">
    <location>
        <position position="54"/>
    </location>
    <ligand>
        <name>Fe cation</name>
        <dbReference type="ChEBI" id="CHEBI:24875"/>
    </ligand>
</feature>
<feature type="binding site" evidence="1">
    <location>
        <position position="58"/>
    </location>
    <ligand>
        <name>Fe cation</name>
        <dbReference type="ChEBI" id="CHEBI:24875"/>
    </ligand>
</feature>
<feature type="binding site" evidence="1">
    <location>
        <position position="128"/>
    </location>
    <ligand>
        <name>Fe cation</name>
        <dbReference type="ChEBI" id="CHEBI:24875"/>
    </ligand>
</feature>
<accession>A4Y3Y4</accession>
<organism>
    <name type="scientific">Shewanella putrefaciens (strain CN-32 / ATCC BAA-453)</name>
    <dbReference type="NCBI Taxonomy" id="319224"/>
    <lineage>
        <taxon>Bacteria</taxon>
        <taxon>Pseudomonadati</taxon>
        <taxon>Pseudomonadota</taxon>
        <taxon>Gammaproteobacteria</taxon>
        <taxon>Alteromonadales</taxon>
        <taxon>Shewanellaceae</taxon>
        <taxon>Shewanella</taxon>
    </lineage>
</organism>
<dbReference type="EC" id="4.4.1.21" evidence="1"/>
<dbReference type="EMBL" id="CP000681">
    <property type="protein sequence ID" value="ABP74667.1"/>
    <property type="molecule type" value="Genomic_DNA"/>
</dbReference>
<dbReference type="SMR" id="A4Y3Y4"/>
<dbReference type="STRING" id="319224.Sputcn32_0938"/>
<dbReference type="KEGG" id="spc:Sputcn32_0938"/>
<dbReference type="eggNOG" id="COG1854">
    <property type="taxonomic scope" value="Bacteria"/>
</dbReference>
<dbReference type="HOGENOM" id="CLU_107531_2_0_6"/>
<dbReference type="GO" id="GO:0005506">
    <property type="term" value="F:iron ion binding"/>
    <property type="evidence" value="ECO:0007669"/>
    <property type="project" value="InterPro"/>
</dbReference>
<dbReference type="GO" id="GO:0043768">
    <property type="term" value="F:S-ribosylhomocysteine lyase activity"/>
    <property type="evidence" value="ECO:0007669"/>
    <property type="project" value="UniProtKB-UniRule"/>
</dbReference>
<dbReference type="GO" id="GO:0009372">
    <property type="term" value="P:quorum sensing"/>
    <property type="evidence" value="ECO:0007669"/>
    <property type="project" value="UniProtKB-UniRule"/>
</dbReference>
<dbReference type="FunFam" id="3.30.1360.80:FF:000001">
    <property type="entry name" value="S-ribosylhomocysteine lyase"/>
    <property type="match status" value="1"/>
</dbReference>
<dbReference type="Gene3D" id="3.30.1360.80">
    <property type="entry name" value="S-ribosylhomocysteinase (LuxS)"/>
    <property type="match status" value="1"/>
</dbReference>
<dbReference type="HAMAP" id="MF_00091">
    <property type="entry name" value="LuxS"/>
    <property type="match status" value="1"/>
</dbReference>
<dbReference type="InterPro" id="IPR037005">
    <property type="entry name" value="LuxS_sf"/>
</dbReference>
<dbReference type="InterPro" id="IPR011249">
    <property type="entry name" value="Metalloenz_LuxS/M16"/>
</dbReference>
<dbReference type="InterPro" id="IPR003815">
    <property type="entry name" value="S-ribosylhomocysteinase"/>
</dbReference>
<dbReference type="NCBIfam" id="NF002602">
    <property type="entry name" value="PRK02260.1-2"/>
    <property type="match status" value="1"/>
</dbReference>
<dbReference type="PANTHER" id="PTHR35799">
    <property type="entry name" value="S-RIBOSYLHOMOCYSTEINE LYASE"/>
    <property type="match status" value="1"/>
</dbReference>
<dbReference type="PANTHER" id="PTHR35799:SF1">
    <property type="entry name" value="S-RIBOSYLHOMOCYSTEINE LYASE"/>
    <property type="match status" value="1"/>
</dbReference>
<dbReference type="Pfam" id="PF02664">
    <property type="entry name" value="LuxS"/>
    <property type="match status" value="1"/>
</dbReference>
<dbReference type="PIRSF" id="PIRSF006160">
    <property type="entry name" value="AI2"/>
    <property type="match status" value="1"/>
</dbReference>
<dbReference type="PRINTS" id="PR01487">
    <property type="entry name" value="LUXSPROTEIN"/>
</dbReference>
<dbReference type="SUPFAM" id="SSF63411">
    <property type="entry name" value="LuxS/MPP-like metallohydrolase"/>
    <property type="match status" value="1"/>
</dbReference>
<proteinExistence type="inferred from homology"/>
<protein>
    <recommendedName>
        <fullName evidence="1">S-ribosylhomocysteine lyase</fullName>
        <ecNumber evidence="1">4.4.1.21</ecNumber>
    </recommendedName>
    <alternativeName>
        <fullName evidence="1">AI-2 synthesis protein</fullName>
    </alternativeName>
    <alternativeName>
        <fullName evidence="1">Autoinducer-2 production protein LuxS</fullName>
    </alternativeName>
</protein>
<sequence length="169" mass="18899">MPLLDSFTVDHTRMNAPAVRVAKHMSTPKGDAITVFDLRFCTPNKEILSERGIHTLEHLFAGFMRDHLNSSNVEIIDISPMGCRTGFYMSLIGEPTEHQVAVAWLAAMEDVLKVVEQSEIPELNEYQCGTYEMHSLEQAQEIARNIIAAGVSVNRNDDLKLSDEILGKL</sequence>
<comment type="function">
    <text evidence="1">Involved in the synthesis of autoinducer 2 (AI-2) which is secreted by bacteria and is used to communicate both the cell density and the metabolic potential of the environment. The regulation of gene expression in response to changes in cell density is called quorum sensing. Catalyzes the transformation of S-ribosylhomocysteine (RHC) to homocysteine (HC) and 4,5-dihydroxy-2,3-pentadione (DPD).</text>
</comment>
<comment type="catalytic activity">
    <reaction evidence="1">
        <text>S-(5-deoxy-D-ribos-5-yl)-L-homocysteine = (S)-4,5-dihydroxypentane-2,3-dione + L-homocysteine</text>
        <dbReference type="Rhea" id="RHEA:17753"/>
        <dbReference type="ChEBI" id="CHEBI:29484"/>
        <dbReference type="ChEBI" id="CHEBI:58195"/>
        <dbReference type="ChEBI" id="CHEBI:58199"/>
        <dbReference type="EC" id="4.4.1.21"/>
    </reaction>
</comment>
<comment type="cofactor">
    <cofactor evidence="1">
        <name>Fe cation</name>
        <dbReference type="ChEBI" id="CHEBI:24875"/>
    </cofactor>
    <text evidence="1">Binds 1 Fe cation per subunit.</text>
</comment>
<comment type="subunit">
    <text evidence="1">Homodimer.</text>
</comment>
<comment type="similarity">
    <text evidence="1">Belongs to the LuxS family.</text>
</comment>
<name>LUXS_SHEPC</name>
<evidence type="ECO:0000255" key="1">
    <source>
        <dbReference type="HAMAP-Rule" id="MF_00091"/>
    </source>
</evidence>
<reference key="1">
    <citation type="submission" date="2007-04" db="EMBL/GenBank/DDBJ databases">
        <title>Complete sequence of Shewanella putrefaciens CN-32.</title>
        <authorList>
            <consortium name="US DOE Joint Genome Institute"/>
            <person name="Copeland A."/>
            <person name="Lucas S."/>
            <person name="Lapidus A."/>
            <person name="Barry K."/>
            <person name="Detter J.C."/>
            <person name="Glavina del Rio T."/>
            <person name="Hammon N."/>
            <person name="Israni S."/>
            <person name="Dalin E."/>
            <person name="Tice H."/>
            <person name="Pitluck S."/>
            <person name="Chain P."/>
            <person name="Malfatti S."/>
            <person name="Shin M."/>
            <person name="Vergez L."/>
            <person name="Schmutz J."/>
            <person name="Larimer F."/>
            <person name="Land M."/>
            <person name="Hauser L."/>
            <person name="Kyrpides N."/>
            <person name="Mikhailova N."/>
            <person name="Romine M.F."/>
            <person name="Fredrickson J."/>
            <person name="Tiedje J."/>
            <person name="Richardson P."/>
        </authorList>
    </citation>
    <scope>NUCLEOTIDE SEQUENCE [LARGE SCALE GENOMIC DNA]</scope>
    <source>
        <strain>CN-32 / ATCC BAA-453</strain>
    </source>
</reference>
<keyword id="KW-0071">Autoinducer synthesis</keyword>
<keyword id="KW-0408">Iron</keyword>
<keyword id="KW-0456">Lyase</keyword>
<keyword id="KW-0479">Metal-binding</keyword>
<keyword id="KW-0673">Quorum sensing</keyword>